<organism>
    <name type="scientific">Bartonella henselae (strain ATCC 49882 / DSM 28221 / CCUG 30454 / Houston 1)</name>
    <name type="common">Rochalimaea henselae</name>
    <dbReference type="NCBI Taxonomy" id="283166"/>
    <lineage>
        <taxon>Bacteria</taxon>
        <taxon>Pseudomonadati</taxon>
        <taxon>Pseudomonadota</taxon>
        <taxon>Alphaproteobacteria</taxon>
        <taxon>Hyphomicrobiales</taxon>
        <taxon>Bartonellaceae</taxon>
        <taxon>Bartonella</taxon>
    </lineage>
</organism>
<proteinExistence type="inferred from homology"/>
<accession>Q6G1M1</accession>
<gene>
    <name evidence="1" type="primary">sucC</name>
    <name type="ordered locus">BH16560</name>
</gene>
<name>SUCC_BARHE</name>
<dbReference type="EC" id="6.2.1.5" evidence="1"/>
<dbReference type="EMBL" id="BX897699">
    <property type="protein sequence ID" value="CAF28417.1"/>
    <property type="molecule type" value="Genomic_DNA"/>
</dbReference>
<dbReference type="RefSeq" id="WP_011181416.1">
    <property type="nucleotide sequence ID" value="NZ_LRIJ02000001.1"/>
</dbReference>
<dbReference type="SMR" id="Q6G1M1"/>
<dbReference type="PaxDb" id="283166-BH16560"/>
<dbReference type="EnsemblBacteria" id="CAF28417">
    <property type="protein sequence ID" value="CAF28417"/>
    <property type="gene ID" value="BH16560"/>
</dbReference>
<dbReference type="GeneID" id="92986275"/>
<dbReference type="KEGG" id="bhe:BH16560"/>
<dbReference type="eggNOG" id="COG0045">
    <property type="taxonomic scope" value="Bacteria"/>
</dbReference>
<dbReference type="OrthoDB" id="9802602at2"/>
<dbReference type="UniPathway" id="UPA00223">
    <property type="reaction ID" value="UER00999"/>
</dbReference>
<dbReference type="Proteomes" id="UP000000421">
    <property type="component" value="Chromosome"/>
</dbReference>
<dbReference type="GO" id="GO:0005829">
    <property type="term" value="C:cytosol"/>
    <property type="evidence" value="ECO:0007669"/>
    <property type="project" value="TreeGrafter"/>
</dbReference>
<dbReference type="GO" id="GO:0042709">
    <property type="term" value="C:succinate-CoA ligase complex"/>
    <property type="evidence" value="ECO:0007669"/>
    <property type="project" value="TreeGrafter"/>
</dbReference>
<dbReference type="GO" id="GO:0005524">
    <property type="term" value="F:ATP binding"/>
    <property type="evidence" value="ECO:0007669"/>
    <property type="project" value="UniProtKB-UniRule"/>
</dbReference>
<dbReference type="GO" id="GO:0000287">
    <property type="term" value="F:magnesium ion binding"/>
    <property type="evidence" value="ECO:0007669"/>
    <property type="project" value="UniProtKB-UniRule"/>
</dbReference>
<dbReference type="GO" id="GO:0004775">
    <property type="term" value="F:succinate-CoA ligase (ADP-forming) activity"/>
    <property type="evidence" value="ECO:0007669"/>
    <property type="project" value="UniProtKB-UniRule"/>
</dbReference>
<dbReference type="GO" id="GO:0004776">
    <property type="term" value="F:succinate-CoA ligase (GDP-forming) activity"/>
    <property type="evidence" value="ECO:0007669"/>
    <property type="project" value="RHEA"/>
</dbReference>
<dbReference type="GO" id="GO:0006104">
    <property type="term" value="P:succinyl-CoA metabolic process"/>
    <property type="evidence" value="ECO:0007669"/>
    <property type="project" value="TreeGrafter"/>
</dbReference>
<dbReference type="GO" id="GO:0006099">
    <property type="term" value="P:tricarboxylic acid cycle"/>
    <property type="evidence" value="ECO:0007669"/>
    <property type="project" value="UniProtKB-UniRule"/>
</dbReference>
<dbReference type="FunFam" id="3.30.1490.20:FF:000002">
    <property type="entry name" value="Succinate--CoA ligase [ADP-forming] subunit beta"/>
    <property type="match status" value="1"/>
</dbReference>
<dbReference type="FunFam" id="3.30.470.20:FF:000002">
    <property type="entry name" value="Succinate--CoA ligase [ADP-forming] subunit beta"/>
    <property type="match status" value="1"/>
</dbReference>
<dbReference type="FunFam" id="3.40.50.261:FF:000001">
    <property type="entry name" value="Succinate--CoA ligase [ADP-forming] subunit beta"/>
    <property type="match status" value="1"/>
</dbReference>
<dbReference type="Gene3D" id="3.30.1490.20">
    <property type="entry name" value="ATP-grasp fold, A domain"/>
    <property type="match status" value="1"/>
</dbReference>
<dbReference type="Gene3D" id="3.30.470.20">
    <property type="entry name" value="ATP-grasp fold, B domain"/>
    <property type="match status" value="1"/>
</dbReference>
<dbReference type="Gene3D" id="3.40.50.261">
    <property type="entry name" value="Succinyl-CoA synthetase domains"/>
    <property type="match status" value="1"/>
</dbReference>
<dbReference type="HAMAP" id="MF_00558">
    <property type="entry name" value="Succ_CoA_beta"/>
    <property type="match status" value="1"/>
</dbReference>
<dbReference type="InterPro" id="IPR011761">
    <property type="entry name" value="ATP-grasp"/>
</dbReference>
<dbReference type="InterPro" id="IPR013650">
    <property type="entry name" value="ATP-grasp_succ-CoA_synth-type"/>
</dbReference>
<dbReference type="InterPro" id="IPR013815">
    <property type="entry name" value="ATP_grasp_subdomain_1"/>
</dbReference>
<dbReference type="InterPro" id="IPR017866">
    <property type="entry name" value="Succ-CoA_synthase_bsu_CS"/>
</dbReference>
<dbReference type="InterPro" id="IPR005811">
    <property type="entry name" value="SUCC_ACL_C"/>
</dbReference>
<dbReference type="InterPro" id="IPR005809">
    <property type="entry name" value="Succ_CoA_ligase-like_bsu"/>
</dbReference>
<dbReference type="InterPro" id="IPR016102">
    <property type="entry name" value="Succinyl-CoA_synth-like"/>
</dbReference>
<dbReference type="NCBIfam" id="NF001913">
    <property type="entry name" value="PRK00696.1"/>
    <property type="match status" value="1"/>
</dbReference>
<dbReference type="NCBIfam" id="TIGR01016">
    <property type="entry name" value="sucCoAbeta"/>
    <property type="match status" value="1"/>
</dbReference>
<dbReference type="PANTHER" id="PTHR11815:SF10">
    <property type="entry name" value="SUCCINATE--COA LIGASE [GDP-FORMING] SUBUNIT BETA, MITOCHONDRIAL"/>
    <property type="match status" value="1"/>
</dbReference>
<dbReference type="PANTHER" id="PTHR11815">
    <property type="entry name" value="SUCCINYL-COA SYNTHETASE BETA CHAIN"/>
    <property type="match status" value="1"/>
</dbReference>
<dbReference type="Pfam" id="PF08442">
    <property type="entry name" value="ATP-grasp_2"/>
    <property type="match status" value="1"/>
</dbReference>
<dbReference type="Pfam" id="PF00549">
    <property type="entry name" value="Ligase_CoA"/>
    <property type="match status" value="1"/>
</dbReference>
<dbReference type="PIRSF" id="PIRSF001554">
    <property type="entry name" value="SucCS_beta"/>
    <property type="match status" value="1"/>
</dbReference>
<dbReference type="SUPFAM" id="SSF56059">
    <property type="entry name" value="Glutathione synthetase ATP-binding domain-like"/>
    <property type="match status" value="1"/>
</dbReference>
<dbReference type="SUPFAM" id="SSF52210">
    <property type="entry name" value="Succinyl-CoA synthetase domains"/>
    <property type="match status" value="1"/>
</dbReference>
<dbReference type="PROSITE" id="PS50975">
    <property type="entry name" value="ATP_GRASP"/>
    <property type="match status" value="1"/>
</dbReference>
<dbReference type="PROSITE" id="PS01217">
    <property type="entry name" value="SUCCINYL_COA_LIG_3"/>
    <property type="match status" value="1"/>
</dbReference>
<evidence type="ECO:0000255" key="1">
    <source>
        <dbReference type="HAMAP-Rule" id="MF_00558"/>
    </source>
</evidence>
<feature type="chain" id="PRO_1000082019" description="Succinate--CoA ligase [ADP-forming] subunit beta">
    <location>
        <begin position="1"/>
        <end position="398"/>
    </location>
</feature>
<feature type="domain" description="ATP-grasp" evidence="1">
    <location>
        <begin position="9"/>
        <end position="254"/>
    </location>
</feature>
<feature type="binding site" evidence="1">
    <location>
        <position position="46"/>
    </location>
    <ligand>
        <name>ATP</name>
        <dbReference type="ChEBI" id="CHEBI:30616"/>
    </ligand>
</feature>
<feature type="binding site" evidence="1">
    <location>
        <begin position="53"/>
        <end position="55"/>
    </location>
    <ligand>
        <name>ATP</name>
        <dbReference type="ChEBI" id="CHEBI:30616"/>
    </ligand>
</feature>
<feature type="binding site" evidence="1">
    <location>
        <position position="109"/>
    </location>
    <ligand>
        <name>ATP</name>
        <dbReference type="ChEBI" id="CHEBI:30616"/>
    </ligand>
</feature>
<feature type="binding site" evidence="1">
    <location>
        <position position="112"/>
    </location>
    <ligand>
        <name>ATP</name>
        <dbReference type="ChEBI" id="CHEBI:30616"/>
    </ligand>
</feature>
<feature type="binding site" evidence="1">
    <location>
        <position position="117"/>
    </location>
    <ligand>
        <name>ATP</name>
        <dbReference type="ChEBI" id="CHEBI:30616"/>
    </ligand>
</feature>
<feature type="binding site" evidence="1">
    <location>
        <position position="209"/>
    </location>
    <ligand>
        <name>Mg(2+)</name>
        <dbReference type="ChEBI" id="CHEBI:18420"/>
    </ligand>
</feature>
<feature type="binding site" evidence="1">
    <location>
        <position position="223"/>
    </location>
    <ligand>
        <name>Mg(2+)</name>
        <dbReference type="ChEBI" id="CHEBI:18420"/>
    </ligand>
</feature>
<feature type="binding site" evidence="1">
    <location>
        <position position="274"/>
    </location>
    <ligand>
        <name>substrate</name>
        <note>ligand shared with subunit alpha</note>
    </ligand>
</feature>
<feature type="binding site" evidence="1">
    <location>
        <begin position="331"/>
        <end position="333"/>
    </location>
    <ligand>
        <name>substrate</name>
        <note>ligand shared with subunit alpha</note>
    </ligand>
</feature>
<protein>
    <recommendedName>
        <fullName evidence="1">Succinate--CoA ligase [ADP-forming] subunit beta</fullName>
        <ecNumber evidence="1">6.2.1.5</ecNumber>
    </recommendedName>
    <alternativeName>
        <fullName evidence="1">Succinyl-CoA synthetase subunit beta</fullName>
        <shortName evidence="1">SCS-beta</shortName>
    </alternativeName>
</protein>
<sequence length="398" mass="42817">MNIHEYQAKRLLHEYGAPIANGVAVYSVEQAEKWAKKLPGPLYVVKSQIHAGGRGKGKFKELDPDAKGGVRLAKSVEEVVANVKEMLGKTLVTKQTGPEGKQVNRLYIEDGADIERELYLSLLVDRNVGRVAFVVSTEGGMDIETVAEETPEKILTLPINSTQGVTSSDCARLCDALDLHDSAREDGEKLFPILYKAFCEKDMSLLEINPLIVMTNGHLRVLDAKVSFDNNALFRHPDILELRDTSEEDPKEIEASKHDLAYVALEGTIGCMVNGAGLAMATMDIIKLYGAEPANFLDVGGGASKEKVTAAFKIITADPNVKGILVNIFGGIMRCDVIAEGVVAAVREVGLKVPLVVRLEGTNVEQGKAIISDSGLNVIPADDLDDAAQKIVAAVKGA</sequence>
<keyword id="KW-0067">ATP-binding</keyword>
<keyword id="KW-0436">Ligase</keyword>
<keyword id="KW-0460">Magnesium</keyword>
<keyword id="KW-0479">Metal-binding</keyword>
<keyword id="KW-0547">Nucleotide-binding</keyword>
<keyword id="KW-0816">Tricarboxylic acid cycle</keyword>
<reference key="1">
    <citation type="journal article" date="2004" name="Proc. Natl. Acad. Sci. U.S.A.">
        <title>The louse-borne human pathogen Bartonella quintana is a genomic derivative of the zoonotic agent Bartonella henselae.</title>
        <authorList>
            <person name="Alsmark U.C.M."/>
            <person name="Frank A.C."/>
            <person name="Karlberg E.O."/>
            <person name="Legault B.-A."/>
            <person name="Ardell D.H."/>
            <person name="Canbaeck B."/>
            <person name="Eriksson A.-S."/>
            <person name="Naeslund A.K."/>
            <person name="Handley S.A."/>
            <person name="Huvet M."/>
            <person name="La Scola B."/>
            <person name="Holmberg M."/>
            <person name="Andersson S.G.E."/>
        </authorList>
    </citation>
    <scope>NUCLEOTIDE SEQUENCE [LARGE SCALE GENOMIC DNA]</scope>
    <source>
        <strain>ATCC 49882 / DSM 28221 / CCUG 30454 / Houston 1</strain>
    </source>
</reference>
<comment type="function">
    <text evidence="1">Succinyl-CoA synthetase functions in the citric acid cycle (TCA), coupling the hydrolysis of succinyl-CoA to the synthesis of either ATP or GTP and thus represents the only step of substrate-level phosphorylation in the TCA. The beta subunit provides nucleotide specificity of the enzyme and binds the substrate succinate, while the binding sites for coenzyme A and phosphate are found in the alpha subunit.</text>
</comment>
<comment type="catalytic activity">
    <reaction evidence="1">
        <text>succinate + ATP + CoA = succinyl-CoA + ADP + phosphate</text>
        <dbReference type="Rhea" id="RHEA:17661"/>
        <dbReference type="ChEBI" id="CHEBI:30031"/>
        <dbReference type="ChEBI" id="CHEBI:30616"/>
        <dbReference type="ChEBI" id="CHEBI:43474"/>
        <dbReference type="ChEBI" id="CHEBI:57287"/>
        <dbReference type="ChEBI" id="CHEBI:57292"/>
        <dbReference type="ChEBI" id="CHEBI:456216"/>
        <dbReference type="EC" id="6.2.1.5"/>
    </reaction>
    <physiologicalReaction direction="right-to-left" evidence="1">
        <dbReference type="Rhea" id="RHEA:17663"/>
    </physiologicalReaction>
</comment>
<comment type="catalytic activity">
    <reaction evidence="1">
        <text>GTP + succinate + CoA = succinyl-CoA + GDP + phosphate</text>
        <dbReference type="Rhea" id="RHEA:22120"/>
        <dbReference type="ChEBI" id="CHEBI:30031"/>
        <dbReference type="ChEBI" id="CHEBI:37565"/>
        <dbReference type="ChEBI" id="CHEBI:43474"/>
        <dbReference type="ChEBI" id="CHEBI:57287"/>
        <dbReference type="ChEBI" id="CHEBI:57292"/>
        <dbReference type="ChEBI" id="CHEBI:58189"/>
    </reaction>
    <physiologicalReaction direction="right-to-left" evidence="1">
        <dbReference type="Rhea" id="RHEA:22122"/>
    </physiologicalReaction>
</comment>
<comment type="cofactor">
    <cofactor evidence="1">
        <name>Mg(2+)</name>
        <dbReference type="ChEBI" id="CHEBI:18420"/>
    </cofactor>
    <text evidence="1">Binds 1 Mg(2+) ion per subunit.</text>
</comment>
<comment type="pathway">
    <text evidence="1">Carbohydrate metabolism; tricarboxylic acid cycle; succinate from succinyl-CoA (ligase route): step 1/1.</text>
</comment>
<comment type="subunit">
    <text evidence="1">Heterotetramer of two alpha and two beta subunits.</text>
</comment>
<comment type="similarity">
    <text evidence="1">Belongs to the succinate/malate CoA ligase beta subunit family.</text>
</comment>